<reference key="1">
    <citation type="submission" date="2009-02" db="EMBL/GenBank/DDBJ databases">
        <title>Genome sequence of Bacillus cereus 03BB102.</title>
        <authorList>
            <person name="Dodson R.J."/>
            <person name="Jackson P."/>
            <person name="Munk A.C."/>
            <person name="Brettin T."/>
            <person name="Bruce D."/>
            <person name="Detter C."/>
            <person name="Tapia R."/>
            <person name="Han C."/>
            <person name="Sutton G."/>
            <person name="Sims D."/>
        </authorList>
    </citation>
    <scope>NUCLEOTIDE SEQUENCE [LARGE SCALE GENOMIC DNA]</scope>
    <source>
        <strain>03BB102</strain>
    </source>
</reference>
<comment type="function">
    <text evidence="1">This is one of the proteins that bind and probably mediate the attachment of the 5S RNA into the large ribosomal subunit, where it forms part of the central protuberance. In the 70S ribosome it contacts protein S13 of the 30S subunit (bridge B1b), connecting the 2 subunits; this bridge is implicated in subunit movement. Contacts the P site tRNA; the 5S rRNA and some of its associated proteins might help stabilize positioning of ribosome-bound tRNAs.</text>
</comment>
<comment type="subunit">
    <text evidence="1">Part of the 50S ribosomal subunit; part of the 5S rRNA/L5/L18/L25 subcomplex. Contacts the 5S rRNA and the P site tRNA. Forms a bridge to the 30S subunit in the 70S ribosome.</text>
</comment>
<comment type="similarity">
    <text evidence="1">Belongs to the universal ribosomal protein uL5 family.</text>
</comment>
<sequence length="179" mass="20165">MNRLKEKFQKEITPALVSKFNYKSVMQVPKIEKIVINTGVGDAVSNSKALDNAVEELTQITGQKPVVTRAKKSIAGFRLREGMPIGAKVTLRGEQMYEFFDKLVSVSLPRVRDFRGVSKKSFDGRGNYTLGVKEQLIFPEIDYDKVSKVRGMDIVIVTTAKTDEEARELLTQFGMPFQK</sequence>
<dbReference type="EMBL" id="CP001407">
    <property type="protein sequence ID" value="ACO29146.1"/>
    <property type="molecule type" value="Genomic_DNA"/>
</dbReference>
<dbReference type="RefSeq" id="WP_001080831.1">
    <property type="nucleotide sequence ID" value="NZ_CP009318.1"/>
</dbReference>
<dbReference type="SMR" id="C1ET51"/>
<dbReference type="GeneID" id="93010931"/>
<dbReference type="KEGG" id="bcx:BCA_0151"/>
<dbReference type="PATRIC" id="fig|572264.18.peg.186"/>
<dbReference type="Proteomes" id="UP000002210">
    <property type="component" value="Chromosome"/>
</dbReference>
<dbReference type="GO" id="GO:1990904">
    <property type="term" value="C:ribonucleoprotein complex"/>
    <property type="evidence" value="ECO:0007669"/>
    <property type="project" value="UniProtKB-KW"/>
</dbReference>
<dbReference type="GO" id="GO:0005840">
    <property type="term" value="C:ribosome"/>
    <property type="evidence" value="ECO:0007669"/>
    <property type="project" value="UniProtKB-KW"/>
</dbReference>
<dbReference type="GO" id="GO:0019843">
    <property type="term" value="F:rRNA binding"/>
    <property type="evidence" value="ECO:0007669"/>
    <property type="project" value="UniProtKB-UniRule"/>
</dbReference>
<dbReference type="GO" id="GO:0003735">
    <property type="term" value="F:structural constituent of ribosome"/>
    <property type="evidence" value="ECO:0007669"/>
    <property type="project" value="InterPro"/>
</dbReference>
<dbReference type="GO" id="GO:0000049">
    <property type="term" value="F:tRNA binding"/>
    <property type="evidence" value="ECO:0007669"/>
    <property type="project" value="UniProtKB-UniRule"/>
</dbReference>
<dbReference type="GO" id="GO:0006412">
    <property type="term" value="P:translation"/>
    <property type="evidence" value="ECO:0007669"/>
    <property type="project" value="UniProtKB-UniRule"/>
</dbReference>
<dbReference type="FunFam" id="3.30.1440.10:FF:000001">
    <property type="entry name" value="50S ribosomal protein L5"/>
    <property type="match status" value="1"/>
</dbReference>
<dbReference type="Gene3D" id="3.30.1440.10">
    <property type="match status" value="1"/>
</dbReference>
<dbReference type="HAMAP" id="MF_01333_B">
    <property type="entry name" value="Ribosomal_uL5_B"/>
    <property type="match status" value="1"/>
</dbReference>
<dbReference type="InterPro" id="IPR002132">
    <property type="entry name" value="Ribosomal_uL5"/>
</dbReference>
<dbReference type="InterPro" id="IPR020930">
    <property type="entry name" value="Ribosomal_uL5_bac-type"/>
</dbReference>
<dbReference type="InterPro" id="IPR031309">
    <property type="entry name" value="Ribosomal_uL5_C"/>
</dbReference>
<dbReference type="InterPro" id="IPR020929">
    <property type="entry name" value="Ribosomal_uL5_CS"/>
</dbReference>
<dbReference type="InterPro" id="IPR022803">
    <property type="entry name" value="Ribosomal_uL5_dom_sf"/>
</dbReference>
<dbReference type="InterPro" id="IPR031310">
    <property type="entry name" value="Ribosomal_uL5_N"/>
</dbReference>
<dbReference type="NCBIfam" id="NF000585">
    <property type="entry name" value="PRK00010.1"/>
    <property type="match status" value="1"/>
</dbReference>
<dbReference type="PANTHER" id="PTHR11994">
    <property type="entry name" value="60S RIBOSOMAL PROTEIN L11-RELATED"/>
    <property type="match status" value="1"/>
</dbReference>
<dbReference type="Pfam" id="PF00281">
    <property type="entry name" value="Ribosomal_L5"/>
    <property type="match status" value="1"/>
</dbReference>
<dbReference type="Pfam" id="PF00673">
    <property type="entry name" value="Ribosomal_L5_C"/>
    <property type="match status" value="1"/>
</dbReference>
<dbReference type="PIRSF" id="PIRSF002161">
    <property type="entry name" value="Ribosomal_L5"/>
    <property type="match status" value="1"/>
</dbReference>
<dbReference type="SUPFAM" id="SSF55282">
    <property type="entry name" value="RL5-like"/>
    <property type="match status" value="1"/>
</dbReference>
<dbReference type="PROSITE" id="PS00358">
    <property type="entry name" value="RIBOSOMAL_L5"/>
    <property type="match status" value="1"/>
</dbReference>
<gene>
    <name evidence="1" type="primary">rplE</name>
    <name type="ordered locus">BCA_0151</name>
</gene>
<feature type="chain" id="PRO_1000166110" description="Large ribosomal subunit protein uL5">
    <location>
        <begin position="1"/>
        <end position="179"/>
    </location>
</feature>
<proteinExistence type="inferred from homology"/>
<protein>
    <recommendedName>
        <fullName evidence="1">Large ribosomal subunit protein uL5</fullName>
    </recommendedName>
    <alternativeName>
        <fullName evidence="2">50S ribosomal protein L5</fullName>
    </alternativeName>
</protein>
<name>RL5_BACC3</name>
<evidence type="ECO:0000255" key="1">
    <source>
        <dbReference type="HAMAP-Rule" id="MF_01333"/>
    </source>
</evidence>
<evidence type="ECO:0000305" key="2"/>
<keyword id="KW-0687">Ribonucleoprotein</keyword>
<keyword id="KW-0689">Ribosomal protein</keyword>
<keyword id="KW-0694">RNA-binding</keyword>
<keyword id="KW-0699">rRNA-binding</keyword>
<keyword id="KW-0820">tRNA-binding</keyword>
<organism>
    <name type="scientific">Bacillus cereus (strain 03BB102)</name>
    <dbReference type="NCBI Taxonomy" id="572264"/>
    <lineage>
        <taxon>Bacteria</taxon>
        <taxon>Bacillati</taxon>
        <taxon>Bacillota</taxon>
        <taxon>Bacilli</taxon>
        <taxon>Bacillales</taxon>
        <taxon>Bacillaceae</taxon>
        <taxon>Bacillus</taxon>
        <taxon>Bacillus cereus group</taxon>
    </lineage>
</organism>
<accession>C1ET51</accession>